<sequence>MNAPQNSPEIGREIIAAGIRTNLHDSGAGFPLMMIHGSGPGVTAWANWRLVMPELAKSRRVIAPDMLGFGYSERPADAQYNRDVWVDHAVGVLDALEIEQADLVGNSFGGGIALALAIRHPERVRRLVLMGSAGVSFPITEGLDAVWGYNPSFAEMRRLLDIFAFDRNLVNDELAELRYQASIRPGFHESFAAMFPAPRQRWVDGLASAEAAIRALPHETLVIHGREDQIIPLQTSLTLADWIARAQLHVFGQCGHWTQIEHAARFASLVGDFLAEADAAAIS</sequence>
<protein>
    <recommendedName>
        <fullName>2-hydroxymuconate semialdehyde hydrolase</fullName>
        <shortName>HMSH</shortName>
        <ecNumber>3.7.1.9</ecNumber>
    </recommendedName>
    <alternativeName>
        <fullName>2-hydroxymuconic semialdehyde hydrolase</fullName>
    </alternativeName>
</protein>
<comment type="function">
    <text>Catalyzes the conversion of 2-hydroxymuconate semialdehyde to 2-hydroxypent-2,4-dienoate.</text>
</comment>
<comment type="catalytic activity">
    <reaction>
        <text>(2Z,4E)-2-hydroxy-6-oxohexa-2,4-dienoate + H2O = 2-oxopent-4-enoate + formate + H(+)</text>
        <dbReference type="Rhea" id="RHEA:14549"/>
        <dbReference type="ChEBI" id="CHEBI:11641"/>
        <dbReference type="ChEBI" id="CHEBI:15377"/>
        <dbReference type="ChEBI" id="CHEBI:15378"/>
        <dbReference type="ChEBI" id="CHEBI:15740"/>
        <dbReference type="ChEBI" id="CHEBI:71198"/>
        <dbReference type="EC" id="3.7.1.9"/>
    </reaction>
</comment>
<comment type="pathway">
    <text>Aromatic compound metabolism; benzoate degradation via hydroxylation.</text>
</comment>
<comment type="similarity">
    <text evidence="3">Belongs to the DmpD/TodF/XylF esterase family.</text>
</comment>
<accession>P19076</accession>
<proteinExistence type="inferred from homology"/>
<reference key="1">
    <citation type="journal article" date="1990" name="Biochim. Biophys. Acta">
        <title>Nucleotide sequences of the meta-cleavage pathway enzymes 2-hydroxymuconic semialdehyde dehydrogenase and 2-hydroxymuconic semialdehyde hydrolase from Pseudomonas CF600.</title>
        <authorList>
            <person name="Nordlund I."/>
            <person name="Shingler V."/>
        </authorList>
    </citation>
    <scope>NUCLEOTIDE SEQUENCE [GENOMIC DNA]</scope>
</reference>
<organism>
    <name type="scientific">Pseudomonas sp. (strain CF600)</name>
    <dbReference type="NCBI Taxonomy" id="79676"/>
    <lineage>
        <taxon>Bacteria</taxon>
        <taxon>Pseudomonadati</taxon>
        <taxon>Pseudomonadota</taxon>
    </lineage>
</organism>
<geneLocation type="plasmid">
    <name>pVI150</name>
</geneLocation>
<gene>
    <name type="primary">dmpD</name>
</gene>
<keyword id="KW-0058">Aromatic hydrocarbons catabolism</keyword>
<keyword id="KW-0378">Hydrolase</keyword>
<keyword id="KW-0614">Plasmid</keyword>
<keyword id="KW-0719">Serine esterase</keyword>
<dbReference type="EC" id="3.7.1.9"/>
<dbReference type="EMBL" id="X52805">
    <property type="protein sequence ID" value="CAA36993.1"/>
    <property type="molecule type" value="Genomic_DNA"/>
</dbReference>
<dbReference type="SMR" id="P19076"/>
<dbReference type="ESTHER" id="psesp-dmpd">
    <property type="family name" value="Carbon-carbon_bond_hydrolase"/>
</dbReference>
<dbReference type="KEGG" id="ag:CAA36993"/>
<dbReference type="UniPathway" id="UPA00156"/>
<dbReference type="GO" id="GO:0016020">
    <property type="term" value="C:membrane"/>
    <property type="evidence" value="ECO:0007669"/>
    <property type="project" value="TreeGrafter"/>
</dbReference>
<dbReference type="GO" id="GO:0018775">
    <property type="term" value="F:2-hydroxymuconate-semialdehyde hydrolase activity"/>
    <property type="evidence" value="ECO:0007669"/>
    <property type="project" value="UniProtKB-EC"/>
</dbReference>
<dbReference type="GO" id="GO:0052689">
    <property type="term" value="F:carboxylic ester hydrolase activity"/>
    <property type="evidence" value="ECO:0007669"/>
    <property type="project" value="UniProtKB-KW"/>
</dbReference>
<dbReference type="GO" id="GO:0043640">
    <property type="term" value="P:benzoate catabolic process via hydroxylation"/>
    <property type="evidence" value="ECO:0007669"/>
    <property type="project" value="UniProtKB-UniPathway"/>
</dbReference>
<dbReference type="Gene3D" id="3.40.50.1820">
    <property type="entry name" value="alpha/beta hydrolase"/>
    <property type="match status" value="1"/>
</dbReference>
<dbReference type="InterPro" id="IPR000073">
    <property type="entry name" value="AB_hydrolase_1"/>
</dbReference>
<dbReference type="InterPro" id="IPR029058">
    <property type="entry name" value="AB_hydrolase_fold"/>
</dbReference>
<dbReference type="InterPro" id="IPR050266">
    <property type="entry name" value="AB_hydrolase_sf"/>
</dbReference>
<dbReference type="InterPro" id="IPR000639">
    <property type="entry name" value="Epox_hydrolase-like"/>
</dbReference>
<dbReference type="PANTHER" id="PTHR43798:SF31">
    <property type="entry name" value="AB HYDROLASE SUPERFAMILY PROTEIN YCLE"/>
    <property type="match status" value="1"/>
</dbReference>
<dbReference type="PANTHER" id="PTHR43798">
    <property type="entry name" value="MONOACYLGLYCEROL LIPASE"/>
    <property type="match status" value="1"/>
</dbReference>
<dbReference type="Pfam" id="PF00561">
    <property type="entry name" value="Abhydrolase_1"/>
    <property type="match status" value="1"/>
</dbReference>
<dbReference type="PRINTS" id="PR00111">
    <property type="entry name" value="ABHYDROLASE"/>
</dbReference>
<dbReference type="PRINTS" id="PR00412">
    <property type="entry name" value="EPOXHYDRLASE"/>
</dbReference>
<dbReference type="SUPFAM" id="SSF53474">
    <property type="entry name" value="alpha/beta-Hydrolases"/>
    <property type="match status" value="1"/>
</dbReference>
<feature type="chain" id="PRO_0000207055" description="2-hydroxymuconate semialdehyde hydrolase">
    <location>
        <begin position="1"/>
        <end position="283"/>
    </location>
</feature>
<feature type="domain" description="AB hydrolase-1" evidence="2">
    <location>
        <begin position="32"/>
        <end position="262"/>
    </location>
</feature>
<feature type="active site" evidence="1">
    <location>
        <position position="107"/>
    </location>
</feature>
<feature type="active site" evidence="1">
    <location>
        <position position="228"/>
    </location>
</feature>
<feature type="active site" evidence="1">
    <location>
        <position position="256"/>
    </location>
</feature>
<evidence type="ECO:0000250" key="1"/>
<evidence type="ECO:0000255" key="2"/>
<evidence type="ECO:0000305" key="3"/>
<name>DMPD_PSEUF</name>